<proteinExistence type="inferred from homology"/>
<sequence>MIERGKFRSLTLINWNGFFARTFDLDELVTTLSGGNGAGKSTTMAAFVTALIPDLTLLHFRNTTEAGATSGSRDKGLHGKLKAGVCYSMLDTINSRHQRVVVGVRLQQVAGRDRKVDIKPFAIQGLPMSVQPTQLVTETLNERQARVLPLNELKDKLEAMEGVQFKQFNSITDYHSLMFDLGIIARRLRSASDRSKFYRLIEASLYGGISSAITRSLRDYLLPENSGVRKAFQDMEAALRENRMTLEAIRVTQSDRDLFKHLISEATNYVAADYMRHANERRVHLDKALEFRRELHTSRQQLAAEQYKHVDMARELAEHNGAEGDLEADYQAASDHLNLVQTALRQQEKIERYEADLDELQIRLEEQNEVVAEAIERQEENEARAEAAELEVDELKSQLADYQQALDVQQTRAIQYNQAIAALNRAKELCHLPDLTADSAAEWLETFQAKELEATEKMLSLEQKMSMAQTAHSQFEQAYQLVVAINGPLARNEAWDVARELLREGVDQRHLAEQVQPLRMRLSELEQRLREQQEAERLLADFCKRQGKNFDIDELEALHQELEARIASLSDSVSNAREERMALRQEQEQLQSRIQSLMQRAPVWLAAQNSLNQLSEQCGEEFTSSQDVTEFLQQLLEREREAIVERDEVGARKNAVDEEIERLSQPGGSEDQRLNALAERFGGVLLSEIYDDVSLEDAPYFSALYGPSRHAIVVPDLSQVTEHLEGLTDCPEDLYLIEGDPQSFDDSVFSVDELEKAVVVKIADRQWRYSRFPEVPLFGRAARESRIESLHAEREVLSERFATLSFDVQKIQRLHQAFSRFIGSHLAVAFESDPEAEIRQLNSRRVELERALSNHENDNQQQRIQFEQAKEGVTALNRILPRLNLLADDSLADRVDEIRERLDEAQEAARFVQQFGNQLAKLEPIVSVLQSDPEQFEQLKEDYAYSQQMQRDARQQAFALTEVVQRRAHFSYSDSAEMLSGNSDLNEKLRERLEQAEAERTRAREALRGHAAQLNQYNQVLASLKSSYDTKKELLNDLQRELQDIGVRADSGAEERARIRRDELHAQLSNNRSRRNQLEKALTFCEAEMDNLTRKLRKLERDYFEMREQVVTAKAGWCAVMRMVKDNGVERRLHRRELAYLSADDLRSMSDKALGALRLAVADNEHLRDVLRMSEDPKRPERKIQFFVAVYQHLRERIRQDIIRTDDPVEAIEQMEIELSRLTEELTSREQKLAISSRSVANIIRKTIQREQNRIRMLNQGLQNVSFGQVNSVRLNVNVRETHAMLLDVLSEQHEQHQDLFNSNRLTFSEALAKLYQRLNPQIDMGQRTPQTIGEELLDYRNYLEMEVEVNRGSDGWLRAESGALSTGEAIGTGMSILVMVVQSWEDESRRLRGKDISPCRLLFLDEAARLDARSIATLFELCERLQMQLIIAAPENISPEKGTTYKLVRKVFQNTEHVHVVGLRGFAPQLPETLPGSDEAPSQAS</sequence>
<reference key="1">
    <citation type="journal article" date="2009" name="J. Bacteriol.">
        <title>Complete genome sequence and comparative genome analysis of enteropathogenic Escherichia coli O127:H6 strain E2348/69.</title>
        <authorList>
            <person name="Iguchi A."/>
            <person name="Thomson N.R."/>
            <person name="Ogura Y."/>
            <person name="Saunders D."/>
            <person name="Ooka T."/>
            <person name="Henderson I.R."/>
            <person name="Harris D."/>
            <person name="Asadulghani M."/>
            <person name="Kurokawa K."/>
            <person name="Dean P."/>
            <person name="Kenny B."/>
            <person name="Quail M.A."/>
            <person name="Thurston S."/>
            <person name="Dougan G."/>
            <person name="Hayashi T."/>
            <person name="Parkhill J."/>
            <person name="Frankel G."/>
        </authorList>
    </citation>
    <scope>NUCLEOTIDE SEQUENCE [LARGE SCALE GENOMIC DNA]</scope>
    <source>
        <strain>E2348/69 / EPEC</strain>
    </source>
</reference>
<dbReference type="EMBL" id="FM180568">
    <property type="protein sequence ID" value="CAS08465.1"/>
    <property type="molecule type" value="Genomic_DNA"/>
</dbReference>
<dbReference type="RefSeq" id="WP_000572652.1">
    <property type="nucleotide sequence ID" value="NC_011601.1"/>
</dbReference>
<dbReference type="SMR" id="B7UN10"/>
<dbReference type="KEGG" id="ecg:E2348C_0917"/>
<dbReference type="HOGENOM" id="CLU_004430_0_0_6"/>
<dbReference type="Proteomes" id="UP000008205">
    <property type="component" value="Chromosome"/>
</dbReference>
<dbReference type="GO" id="GO:0005737">
    <property type="term" value="C:cytoplasm"/>
    <property type="evidence" value="ECO:0007669"/>
    <property type="project" value="UniProtKB-UniRule"/>
</dbReference>
<dbReference type="GO" id="GO:0009295">
    <property type="term" value="C:nucleoid"/>
    <property type="evidence" value="ECO:0007669"/>
    <property type="project" value="UniProtKB-SubCell"/>
</dbReference>
<dbReference type="GO" id="GO:0005524">
    <property type="term" value="F:ATP binding"/>
    <property type="evidence" value="ECO:0007669"/>
    <property type="project" value="UniProtKB-UniRule"/>
</dbReference>
<dbReference type="GO" id="GO:0003677">
    <property type="term" value="F:DNA binding"/>
    <property type="evidence" value="ECO:0007669"/>
    <property type="project" value="UniProtKB-UniRule"/>
</dbReference>
<dbReference type="GO" id="GO:0051301">
    <property type="term" value="P:cell division"/>
    <property type="evidence" value="ECO:0007669"/>
    <property type="project" value="UniProtKB-KW"/>
</dbReference>
<dbReference type="GO" id="GO:0030261">
    <property type="term" value="P:chromosome condensation"/>
    <property type="evidence" value="ECO:0007669"/>
    <property type="project" value="UniProtKB-KW"/>
</dbReference>
<dbReference type="GO" id="GO:0007059">
    <property type="term" value="P:chromosome segregation"/>
    <property type="evidence" value="ECO:0007669"/>
    <property type="project" value="UniProtKB-UniRule"/>
</dbReference>
<dbReference type="GO" id="GO:0006260">
    <property type="term" value="P:DNA replication"/>
    <property type="evidence" value="ECO:0007669"/>
    <property type="project" value="UniProtKB-UniRule"/>
</dbReference>
<dbReference type="FunFam" id="1.20.58.850:FF:000001">
    <property type="entry name" value="Chromosome partition protein MukB"/>
    <property type="match status" value="1"/>
</dbReference>
<dbReference type="FunFam" id="3.30.70.3500:FF:000001">
    <property type="entry name" value="Chromosome partition protein MukB"/>
    <property type="match status" value="1"/>
</dbReference>
<dbReference type="FunFam" id="3.40.1140.10:FF:000001">
    <property type="entry name" value="Chromosome partition protein MukB"/>
    <property type="match status" value="1"/>
</dbReference>
<dbReference type="FunFam" id="3.40.1140.10:FF:000002">
    <property type="entry name" value="Chromosome partition protein MukB"/>
    <property type="match status" value="1"/>
</dbReference>
<dbReference type="Gene3D" id="1.10.287.1490">
    <property type="match status" value="1"/>
</dbReference>
<dbReference type="Gene3D" id="1.20.58.850">
    <property type="match status" value="1"/>
</dbReference>
<dbReference type="Gene3D" id="3.40.1140.10">
    <property type="match status" value="2"/>
</dbReference>
<dbReference type="Gene3D" id="1.20.5.420">
    <property type="entry name" value="Immunoglobulin FC, subunit C"/>
    <property type="match status" value="1"/>
</dbReference>
<dbReference type="Gene3D" id="3.30.70.3500">
    <property type="entry name" value="MukB, hinge domain"/>
    <property type="match status" value="1"/>
</dbReference>
<dbReference type="HAMAP" id="MF_01800">
    <property type="entry name" value="MukB"/>
    <property type="match status" value="1"/>
</dbReference>
<dbReference type="InterPro" id="IPR012090">
    <property type="entry name" value="MukB"/>
</dbReference>
<dbReference type="InterPro" id="IPR050308">
    <property type="entry name" value="MukB/SMC"/>
</dbReference>
<dbReference type="InterPro" id="IPR032520">
    <property type="entry name" value="MukB_hinge"/>
</dbReference>
<dbReference type="InterPro" id="IPR042501">
    <property type="entry name" value="MukB_hinge_sf"/>
</dbReference>
<dbReference type="InterPro" id="IPR007406">
    <property type="entry name" value="MukB_N_dom"/>
</dbReference>
<dbReference type="InterPro" id="IPR027417">
    <property type="entry name" value="P-loop_NTPase"/>
</dbReference>
<dbReference type="NCBIfam" id="NF003422">
    <property type="entry name" value="PRK04863.1"/>
    <property type="match status" value="1"/>
</dbReference>
<dbReference type="PANTHER" id="PTHR42963">
    <property type="entry name" value="CHROMOSOME PARTITION PROTEIN MUKB"/>
    <property type="match status" value="1"/>
</dbReference>
<dbReference type="PANTHER" id="PTHR42963:SF1">
    <property type="entry name" value="DUF4476 DOMAIN-CONTAINING PROTEIN"/>
    <property type="match status" value="1"/>
</dbReference>
<dbReference type="Pfam" id="PF04310">
    <property type="entry name" value="MukB"/>
    <property type="match status" value="1"/>
</dbReference>
<dbReference type="Pfam" id="PF16330">
    <property type="entry name" value="MukB_hinge"/>
    <property type="match status" value="1"/>
</dbReference>
<dbReference type="Pfam" id="PF13558">
    <property type="entry name" value="SbcC_Walker_B"/>
    <property type="match status" value="1"/>
</dbReference>
<dbReference type="PIRSF" id="PIRSF005246">
    <property type="entry name" value="MukB"/>
    <property type="match status" value="1"/>
</dbReference>
<dbReference type="SUPFAM" id="SSF52540">
    <property type="entry name" value="P-loop containing nucleoside triphosphate hydrolases"/>
    <property type="match status" value="2"/>
</dbReference>
<comment type="function">
    <text evidence="1">Plays a central role in chromosome condensation, segregation and cell cycle progression. Functions as a homodimer, which is essential for chromosome partition. Involved in negative DNA supercoiling in vivo, and by this means organize and compact chromosomes. May achieve or facilitate chromosome segregation by condensation DNA from both sides of a centrally located replisome during cell division.</text>
</comment>
<comment type="subunit">
    <text evidence="1">Homodimerization via its hinge domain. Binds to DNA via its C-terminal region. Interacts, and probably forms a ternary complex, with MukE and MukF via its C-terminal region. The complex formation is stimulated by calcium or magnesium. Interacts with tubulin-related protein FtsZ.</text>
</comment>
<comment type="subcellular location">
    <subcellularLocation>
        <location evidence="1">Cytoplasm</location>
        <location evidence="1">Nucleoid</location>
    </subcellularLocation>
    <text evidence="1">Restricted to the nucleoid region.</text>
</comment>
<comment type="domain">
    <text evidence="1">The hinge domain, which separates the large intramolecular coiled coil regions, allows the homodimerization, forming a V-shaped homodimer.</text>
</comment>
<comment type="similarity">
    <text evidence="1">Belongs to the SMC family. MukB subfamily.</text>
</comment>
<gene>
    <name evidence="1" type="primary">mukB</name>
    <name type="ordered locus">E2348C_0917</name>
</gene>
<protein>
    <recommendedName>
        <fullName evidence="1">Chromosome partition protein MukB</fullName>
    </recommendedName>
    <alternativeName>
        <fullName evidence="1">Structural maintenance of chromosome-related protein</fullName>
    </alternativeName>
</protein>
<evidence type="ECO:0000255" key="1">
    <source>
        <dbReference type="HAMAP-Rule" id="MF_01800"/>
    </source>
</evidence>
<keyword id="KW-0067">ATP-binding</keyword>
<keyword id="KW-0131">Cell cycle</keyword>
<keyword id="KW-0132">Cell division</keyword>
<keyword id="KW-0159">Chromosome partition</keyword>
<keyword id="KW-0175">Coiled coil</keyword>
<keyword id="KW-0963">Cytoplasm</keyword>
<keyword id="KW-0226">DNA condensation</keyword>
<keyword id="KW-0238">DNA-binding</keyword>
<keyword id="KW-0547">Nucleotide-binding</keyword>
<keyword id="KW-1185">Reference proteome</keyword>
<organism>
    <name type="scientific">Escherichia coli O127:H6 (strain E2348/69 / EPEC)</name>
    <dbReference type="NCBI Taxonomy" id="574521"/>
    <lineage>
        <taxon>Bacteria</taxon>
        <taxon>Pseudomonadati</taxon>
        <taxon>Pseudomonadota</taxon>
        <taxon>Gammaproteobacteria</taxon>
        <taxon>Enterobacterales</taxon>
        <taxon>Enterobacteriaceae</taxon>
        <taxon>Escherichia</taxon>
    </lineage>
</organism>
<feature type="chain" id="PRO_1000187466" description="Chromosome partition protein MukB">
    <location>
        <begin position="1"/>
        <end position="1486"/>
    </location>
</feature>
<feature type="region of interest" description="Flexible hinge" evidence="1">
    <location>
        <begin position="666"/>
        <end position="783"/>
    </location>
</feature>
<feature type="coiled-coil region" evidence="1">
    <location>
        <begin position="326"/>
        <end position="418"/>
    </location>
</feature>
<feature type="coiled-coil region" evidence="1">
    <location>
        <begin position="444"/>
        <end position="480"/>
    </location>
</feature>
<feature type="coiled-coil region" evidence="1">
    <location>
        <begin position="509"/>
        <end position="603"/>
    </location>
</feature>
<feature type="coiled-coil region" evidence="1">
    <location>
        <begin position="835"/>
        <end position="923"/>
    </location>
</feature>
<feature type="coiled-coil region" evidence="1">
    <location>
        <begin position="977"/>
        <end position="1115"/>
    </location>
</feature>
<feature type="coiled-coil region" evidence="1">
    <location>
        <begin position="1209"/>
        <end position="1266"/>
    </location>
</feature>
<feature type="binding site" evidence="1">
    <location>
        <begin position="34"/>
        <end position="41"/>
    </location>
    <ligand>
        <name>ATP</name>
        <dbReference type="ChEBI" id="CHEBI:30616"/>
    </ligand>
</feature>
<name>MUKB_ECO27</name>
<accession>B7UN10</accession>